<sequence>MQRERMSKKKISQVHCIPSGDHILMTASSSKHIPHIRFYKAWKGNNRFCCGGRLIFGPDVSSLYLTSFLIGAPALTFCIRMLVWIKRGDPFFNYTVLASGFILTLLDFTFLMLTSARDPGIIPRNKTSMILEDDSDSSLTQSMEWVNNKTPNLKIPRTKDVFVNGYTIKVKFCDTCLLYRPPRASHCSICNNCVQRFDHHCPWVGQCIARRNYPFFICFISSSTLLCIYVFVFSWINLIRQPGKLWRTMSDDIVSVILIVYTFVAVWFVGGLTIFHFYLMSTNQTTYENFRYRYDKKENPYKRGLLKNVKEVLFAKIPPSQLDLRAMVPEEDDMTIASNDSEYESEYTSSVRYDTEMGGKLIKRDSPRKLPLPTRNLDDIKDISDNYDRSTTTREDASDRDPSFFSSQLDLPK</sequence>
<reference key="1">
    <citation type="journal article" date="1997" name="DNA Res.">
        <title>Structural analysis of Arabidopsis thaliana chromosome 5. I. Sequence features of the 1.6 Mb regions covered by twenty physically assigned P1 clones.</title>
        <authorList>
            <person name="Sato S."/>
            <person name="Kotani H."/>
            <person name="Nakamura Y."/>
            <person name="Kaneko T."/>
            <person name="Asamizu E."/>
            <person name="Fukami M."/>
            <person name="Miyajima N."/>
            <person name="Tabata S."/>
        </authorList>
    </citation>
    <scope>NUCLEOTIDE SEQUENCE [LARGE SCALE GENOMIC DNA]</scope>
    <source>
        <strain>cv. Columbia</strain>
    </source>
</reference>
<reference key="2">
    <citation type="journal article" date="2017" name="Plant J.">
        <title>Araport11: a complete reannotation of the Arabidopsis thaliana reference genome.</title>
        <authorList>
            <person name="Cheng C.Y."/>
            <person name="Krishnakumar V."/>
            <person name="Chan A.P."/>
            <person name="Thibaud-Nissen F."/>
            <person name="Schobel S."/>
            <person name="Town C.D."/>
        </authorList>
    </citation>
    <scope>GENOME REANNOTATION</scope>
    <source>
        <strain>cv. Columbia</strain>
    </source>
</reference>
<reference key="3">
    <citation type="submission" date="2004-12" db="EMBL/GenBank/DDBJ databases">
        <title>Arabidopsis ORF clones.</title>
        <authorList>
            <person name="Cheuk R.F."/>
            <person name="Chen H."/>
            <person name="Kim C.J."/>
            <person name="Shinn P."/>
            <person name="Ecker J.R."/>
        </authorList>
    </citation>
    <scope>NUCLEOTIDE SEQUENCE [LARGE SCALE MRNA]</scope>
    <source>
        <strain>cv. Columbia</strain>
    </source>
</reference>
<reference key="4">
    <citation type="book" date="2007" name="Proceedings of the 18th international conference on Arabidopsis research">
        <title>S-acylation: dynamic control of plant development and sigalling by lipid modification of proteins.</title>
        <authorList>
            <person name="Hemsley P.A."/>
            <person name="Taylor L."/>
            <person name="Grierson C.S."/>
        </authorList>
    </citation>
    <scope>GENE FAMILY</scope>
    <scope>FUNCTION</scope>
</reference>
<reference key="5">
    <citation type="journal article" date="2012" name="Plant Physiol.">
        <title>Genomics and localization of the Arabidopsis DHHC-cysteine-rich domain S-acyltransferase protein family.</title>
        <authorList>
            <person name="Batistic O."/>
        </authorList>
    </citation>
    <scope>SUBCELLULAR LOCATION</scope>
    <scope>TISSUE SPECIFICITY</scope>
    <scope>GENE FAMILY</scope>
    <scope>NOMENCLATURE</scope>
</reference>
<gene>
    <name type="primary">PAT03</name>
    <name type="ordered locus">At5g05070</name>
    <name type="ORF">MUG13.7</name>
</gene>
<comment type="function">
    <text evidence="1 6">Palmitoyl acyltransferase.</text>
</comment>
<comment type="catalytic activity">
    <reaction>
        <text>L-cysteinyl-[protein] + hexadecanoyl-CoA = S-hexadecanoyl-L-cysteinyl-[protein] + CoA</text>
        <dbReference type="Rhea" id="RHEA:36683"/>
        <dbReference type="Rhea" id="RHEA-COMP:10131"/>
        <dbReference type="Rhea" id="RHEA-COMP:11032"/>
        <dbReference type="ChEBI" id="CHEBI:29950"/>
        <dbReference type="ChEBI" id="CHEBI:57287"/>
        <dbReference type="ChEBI" id="CHEBI:57379"/>
        <dbReference type="ChEBI" id="CHEBI:74151"/>
        <dbReference type="EC" id="2.3.1.225"/>
    </reaction>
</comment>
<comment type="subcellular location">
    <subcellularLocation>
        <location evidence="7">Endoplasmic reticulum membrane</location>
        <topology evidence="7">Multi-pass membrane protein</topology>
    </subcellularLocation>
    <subcellularLocation>
        <location evidence="7">Cytoplasmic vesicle membrane</location>
        <topology evidence="7">Multi-pass membrane protein</topology>
    </subcellularLocation>
</comment>
<comment type="tissue specificity">
    <text evidence="5">Expressed in flowers and pollen.</text>
</comment>
<comment type="domain">
    <text evidence="1">The DHHC domain is required for palmitoyltransferase activity.</text>
</comment>
<comment type="similarity">
    <text evidence="7">Belongs to the DHHC palmitoyltransferase family.</text>
</comment>
<comment type="sequence caution" evidence="7">
    <conflict type="erroneous gene model prediction">
        <sequence resource="EMBL-CDS" id="BAB11529"/>
    </conflict>
</comment>
<accession>Q5PNZ1</accession>
<accession>Q9FF67</accession>
<proteinExistence type="evidence at transcript level"/>
<name>ZDH21_ARATH</name>
<keyword id="KW-0012">Acyltransferase</keyword>
<keyword id="KW-0968">Cytoplasmic vesicle</keyword>
<keyword id="KW-0256">Endoplasmic reticulum</keyword>
<keyword id="KW-0449">Lipoprotein</keyword>
<keyword id="KW-0472">Membrane</keyword>
<keyword id="KW-0564">Palmitate</keyword>
<keyword id="KW-1185">Reference proteome</keyword>
<keyword id="KW-0808">Transferase</keyword>
<keyword id="KW-0812">Transmembrane</keyword>
<keyword id="KW-1133">Transmembrane helix</keyword>
<feature type="chain" id="PRO_0000363606" description="Probable protein S-acyltransferase 3">
    <location>
        <begin position="1"/>
        <end position="413"/>
    </location>
</feature>
<feature type="transmembrane region" description="Helical" evidence="2">
    <location>
        <begin position="65"/>
        <end position="85"/>
    </location>
</feature>
<feature type="transmembrane region" description="Helical" evidence="2">
    <location>
        <begin position="96"/>
        <end position="116"/>
    </location>
</feature>
<feature type="transmembrane region" description="Helical" evidence="2">
    <location>
        <begin position="216"/>
        <end position="236"/>
    </location>
</feature>
<feature type="transmembrane region" description="Helical" evidence="2">
    <location>
        <begin position="255"/>
        <end position="275"/>
    </location>
</feature>
<feature type="domain" description="DHHC" evidence="3">
    <location>
        <begin position="171"/>
        <end position="221"/>
    </location>
</feature>
<feature type="region of interest" description="Disordered" evidence="4">
    <location>
        <begin position="364"/>
        <end position="413"/>
    </location>
</feature>
<feature type="compositionally biased region" description="Basic and acidic residues" evidence="4">
    <location>
        <begin position="376"/>
        <end position="402"/>
    </location>
</feature>
<feature type="compositionally biased region" description="Polar residues" evidence="4">
    <location>
        <begin position="404"/>
        <end position="413"/>
    </location>
</feature>
<feature type="active site" description="S-palmitoyl cysteine intermediate" evidence="1">
    <location>
        <position position="201"/>
    </location>
</feature>
<organism>
    <name type="scientific">Arabidopsis thaliana</name>
    <name type="common">Mouse-ear cress</name>
    <dbReference type="NCBI Taxonomy" id="3702"/>
    <lineage>
        <taxon>Eukaryota</taxon>
        <taxon>Viridiplantae</taxon>
        <taxon>Streptophyta</taxon>
        <taxon>Embryophyta</taxon>
        <taxon>Tracheophyta</taxon>
        <taxon>Spermatophyta</taxon>
        <taxon>Magnoliopsida</taxon>
        <taxon>eudicotyledons</taxon>
        <taxon>Gunneridae</taxon>
        <taxon>Pentapetalae</taxon>
        <taxon>rosids</taxon>
        <taxon>malvids</taxon>
        <taxon>Brassicales</taxon>
        <taxon>Brassicaceae</taxon>
        <taxon>Camelineae</taxon>
        <taxon>Arabidopsis</taxon>
    </lineage>
</organism>
<protein>
    <recommendedName>
        <fullName>Probable protein S-acyltransferase 3</fullName>
        <ecNumber>2.3.1.225</ecNumber>
    </recommendedName>
    <alternativeName>
        <fullName>Probable palmitoyltransferase At5g05070</fullName>
    </alternativeName>
    <alternativeName>
        <fullName>Zinc finger DHHC domain-containing protein At5g05070</fullName>
    </alternativeName>
</protein>
<dbReference type="EC" id="2.3.1.225"/>
<dbReference type="EMBL" id="AB005245">
    <property type="protein sequence ID" value="BAB11529.1"/>
    <property type="status" value="ALT_SEQ"/>
    <property type="molecule type" value="Genomic_DNA"/>
</dbReference>
<dbReference type="EMBL" id="CP002688">
    <property type="protein sequence ID" value="AED90824.1"/>
    <property type="molecule type" value="Genomic_DNA"/>
</dbReference>
<dbReference type="EMBL" id="BT020306">
    <property type="protein sequence ID" value="AAV85661.1"/>
    <property type="molecule type" value="mRNA"/>
</dbReference>
<dbReference type="RefSeq" id="NP_196126.2">
    <property type="nucleotide sequence ID" value="NM_120589.4"/>
</dbReference>
<dbReference type="SMR" id="Q5PNZ1"/>
<dbReference type="FunCoup" id="Q5PNZ1">
    <property type="interactions" value="1685"/>
</dbReference>
<dbReference type="STRING" id="3702.Q5PNZ1"/>
<dbReference type="PaxDb" id="3702-AT5G05070.1"/>
<dbReference type="ProteomicsDB" id="232308"/>
<dbReference type="EnsemblPlants" id="AT5G05070.1">
    <property type="protein sequence ID" value="AT5G05070.1"/>
    <property type="gene ID" value="AT5G05070"/>
</dbReference>
<dbReference type="GeneID" id="830389"/>
<dbReference type="Gramene" id="AT5G05070.1">
    <property type="protein sequence ID" value="AT5G05070.1"/>
    <property type="gene ID" value="AT5G05070"/>
</dbReference>
<dbReference type="KEGG" id="ath:AT5G05070"/>
<dbReference type="Araport" id="AT5G05070"/>
<dbReference type="TAIR" id="AT5G05070"/>
<dbReference type="eggNOG" id="KOG1311">
    <property type="taxonomic scope" value="Eukaryota"/>
</dbReference>
<dbReference type="HOGENOM" id="CLU_018741_7_2_1"/>
<dbReference type="InParanoid" id="Q5PNZ1"/>
<dbReference type="OMA" id="PSSHDGN"/>
<dbReference type="PhylomeDB" id="Q5PNZ1"/>
<dbReference type="PRO" id="PR:Q5PNZ1"/>
<dbReference type="Proteomes" id="UP000006548">
    <property type="component" value="Chromosome 5"/>
</dbReference>
<dbReference type="ExpressionAtlas" id="Q5PNZ1">
    <property type="expression patterns" value="baseline and differential"/>
</dbReference>
<dbReference type="GO" id="GO:0030659">
    <property type="term" value="C:cytoplasmic vesicle membrane"/>
    <property type="evidence" value="ECO:0007669"/>
    <property type="project" value="UniProtKB-SubCell"/>
</dbReference>
<dbReference type="GO" id="GO:0005789">
    <property type="term" value="C:endoplasmic reticulum membrane"/>
    <property type="evidence" value="ECO:0007669"/>
    <property type="project" value="UniProtKB-SubCell"/>
</dbReference>
<dbReference type="GO" id="GO:0019706">
    <property type="term" value="F:protein-cysteine S-palmitoyltransferase activity"/>
    <property type="evidence" value="ECO:0007669"/>
    <property type="project" value="UniProtKB-EC"/>
</dbReference>
<dbReference type="InterPro" id="IPR001594">
    <property type="entry name" value="Palmitoyltrfase_DHHC"/>
</dbReference>
<dbReference type="InterPro" id="IPR039859">
    <property type="entry name" value="PFA4/ZDH16/20/ERF2-like"/>
</dbReference>
<dbReference type="PANTHER" id="PTHR22883:SF391">
    <property type="entry name" value="PROTEIN S-ACYLTRANSFERASE 3-RELATED"/>
    <property type="match status" value="1"/>
</dbReference>
<dbReference type="PANTHER" id="PTHR22883">
    <property type="entry name" value="ZINC FINGER DHHC DOMAIN CONTAINING PROTEIN"/>
    <property type="match status" value="1"/>
</dbReference>
<dbReference type="Pfam" id="PF01529">
    <property type="entry name" value="DHHC"/>
    <property type="match status" value="1"/>
</dbReference>
<dbReference type="PROSITE" id="PS50216">
    <property type="entry name" value="DHHC"/>
    <property type="match status" value="1"/>
</dbReference>
<evidence type="ECO:0000250" key="1"/>
<evidence type="ECO:0000255" key="2"/>
<evidence type="ECO:0000255" key="3">
    <source>
        <dbReference type="PROSITE-ProRule" id="PRU00067"/>
    </source>
</evidence>
<evidence type="ECO:0000256" key="4">
    <source>
        <dbReference type="SAM" id="MobiDB-lite"/>
    </source>
</evidence>
<evidence type="ECO:0000269" key="5">
    <source>
    </source>
</evidence>
<evidence type="ECO:0000269" key="6">
    <source ref="4"/>
</evidence>
<evidence type="ECO:0000305" key="7"/>